<name>MURC_PSEPK</name>
<accession>Q88N75</accession>
<proteinExistence type="inferred from homology"/>
<sequence>MVESQKAMPQPKMGRIRRIHFVGIGGVGMCGIAEVLLNLGYEVSGSDLKASPVTERLESFGAEIFVGHRAENAATADVLVVSSAINPANPEVATALERRIPVVPRAEMLAELMRYRHGVAVAGTHGKTTTTSLLASVFAAGGLDPTFVIGGRLTAAGTNAQLGTSRYLIAEADESDASFLHLQPMVAVVTNIDADHMATYEGDFNKLKKTFVEFLHNLPFYGLAVMCLDDPVVREILPQVKRPTVTYGFSEEADIRAINVRQQGMQTHFTVLRRDREPLEVSVNMPGNHNVLNALATIAIATDEGITDEAIVQGLSGFQGVGRRFQVYGELPVEGGSVMLVDDYGHHPTEVAAVIKAVRGGWPSRRLVIVYQPHRYSRTRDLYDDFVQVLGDANVLLLMEVYPAGEEPIPGADSRQLCHSIRQRGKLDPIYIERGAELAPLVKPLLRAGDILLCQGAGDVGGLAPQLMKSPLFAGAKQEKSK</sequence>
<reference key="1">
    <citation type="journal article" date="2002" name="Environ. Microbiol.">
        <title>Complete genome sequence and comparative analysis of the metabolically versatile Pseudomonas putida KT2440.</title>
        <authorList>
            <person name="Nelson K.E."/>
            <person name="Weinel C."/>
            <person name="Paulsen I.T."/>
            <person name="Dodson R.J."/>
            <person name="Hilbert H."/>
            <person name="Martins dos Santos V.A.P."/>
            <person name="Fouts D.E."/>
            <person name="Gill S.R."/>
            <person name="Pop M."/>
            <person name="Holmes M."/>
            <person name="Brinkac L.M."/>
            <person name="Beanan M.J."/>
            <person name="DeBoy R.T."/>
            <person name="Daugherty S.C."/>
            <person name="Kolonay J.F."/>
            <person name="Madupu R."/>
            <person name="Nelson W.C."/>
            <person name="White O."/>
            <person name="Peterson J.D."/>
            <person name="Khouri H.M."/>
            <person name="Hance I."/>
            <person name="Chris Lee P."/>
            <person name="Holtzapple E.K."/>
            <person name="Scanlan D."/>
            <person name="Tran K."/>
            <person name="Moazzez A."/>
            <person name="Utterback T.R."/>
            <person name="Rizzo M."/>
            <person name="Lee K."/>
            <person name="Kosack D."/>
            <person name="Moestl D."/>
            <person name="Wedler H."/>
            <person name="Lauber J."/>
            <person name="Stjepandic D."/>
            <person name="Hoheisel J."/>
            <person name="Straetz M."/>
            <person name="Heim S."/>
            <person name="Kiewitz C."/>
            <person name="Eisen J.A."/>
            <person name="Timmis K.N."/>
            <person name="Duesterhoeft A."/>
            <person name="Tuemmler B."/>
            <person name="Fraser C.M."/>
        </authorList>
    </citation>
    <scope>NUCLEOTIDE SEQUENCE [LARGE SCALE GENOMIC DNA]</scope>
    <source>
        <strain>ATCC 47054 / DSM 6125 / CFBP 8728 / NCIMB 11950 / KT2440</strain>
    </source>
</reference>
<comment type="function">
    <text evidence="1">Cell wall formation.</text>
</comment>
<comment type="catalytic activity">
    <reaction evidence="1">
        <text>UDP-N-acetyl-alpha-D-muramate + L-alanine + ATP = UDP-N-acetyl-alpha-D-muramoyl-L-alanine + ADP + phosphate + H(+)</text>
        <dbReference type="Rhea" id="RHEA:23372"/>
        <dbReference type="ChEBI" id="CHEBI:15378"/>
        <dbReference type="ChEBI" id="CHEBI:30616"/>
        <dbReference type="ChEBI" id="CHEBI:43474"/>
        <dbReference type="ChEBI" id="CHEBI:57972"/>
        <dbReference type="ChEBI" id="CHEBI:70757"/>
        <dbReference type="ChEBI" id="CHEBI:83898"/>
        <dbReference type="ChEBI" id="CHEBI:456216"/>
        <dbReference type="EC" id="6.3.2.8"/>
    </reaction>
</comment>
<comment type="pathway">
    <text evidence="1">Cell wall biogenesis; peptidoglycan biosynthesis.</text>
</comment>
<comment type="subcellular location">
    <subcellularLocation>
        <location evidence="1">Cytoplasm</location>
    </subcellularLocation>
</comment>
<comment type="similarity">
    <text evidence="1">Belongs to the MurCDEF family.</text>
</comment>
<dbReference type="EC" id="6.3.2.8" evidence="1"/>
<dbReference type="EMBL" id="AE015451">
    <property type="protein sequence ID" value="AAN66961.1"/>
    <property type="molecule type" value="Genomic_DNA"/>
</dbReference>
<dbReference type="RefSeq" id="NP_743497.1">
    <property type="nucleotide sequence ID" value="NC_002947.4"/>
</dbReference>
<dbReference type="RefSeq" id="WP_010952455.1">
    <property type="nucleotide sequence ID" value="NZ_CP169744.1"/>
</dbReference>
<dbReference type="SMR" id="Q88N75"/>
<dbReference type="STRING" id="160488.PP_1338"/>
<dbReference type="PaxDb" id="160488-PP_1338"/>
<dbReference type="GeneID" id="83682228"/>
<dbReference type="KEGG" id="ppu:PP_1338"/>
<dbReference type="PATRIC" id="fig|160488.4.peg.1417"/>
<dbReference type="eggNOG" id="COG0773">
    <property type="taxonomic scope" value="Bacteria"/>
</dbReference>
<dbReference type="HOGENOM" id="CLU_028104_2_2_6"/>
<dbReference type="OrthoDB" id="9804126at2"/>
<dbReference type="PhylomeDB" id="Q88N75"/>
<dbReference type="BioCyc" id="PPUT160488:G1G01-1425-MONOMER"/>
<dbReference type="UniPathway" id="UPA00219"/>
<dbReference type="Proteomes" id="UP000000556">
    <property type="component" value="Chromosome"/>
</dbReference>
<dbReference type="GO" id="GO:0005737">
    <property type="term" value="C:cytoplasm"/>
    <property type="evidence" value="ECO:0007669"/>
    <property type="project" value="UniProtKB-SubCell"/>
</dbReference>
<dbReference type="GO" id="GO:0005524">
    <property type="term" value="F:ATP binding"/>
    <property type="evidence" value="ECO:0007669"/>
    <property type="project" value="UniProtKB-UniRule"/>
</dbReference>
<dbReference type="GO" id="GO:0008763">
    <property type="term" value="F:UDP-N-acetylmuramate-L-alanine ligase activity"/>
    <property type="evidence" value="ECO:0007669"/>
    <property type="project" value="UniProtKB-UniRule"/>
</dbReference>
<dbReference type="GO" id="GO:0051301">
    <property type="term" value="P:cell division"/>
    <property type="evidence" value="ECO:0007669"/>
    <property type="project" value="UniProtKB-KW"/>
</dbReference>
<dbReference type="GO" id="GO:0071555">
    <property type="term" value="P:cell wall organization"/>
    <property type="evidence" value="ECO:0007669"/>
    <property type="project" value="UniProtKB-KW"/>
</dbReference>
<dbReference type="GO" id="GO:0009252">
    <property type="term" value="P:peptidoglycan biosynthetic process"/>
    <property type="evidence" value="ECO:0007669"/>
    <property type="project" value="UniProtKB-UniRule"/>
</dbReference>
<dbReference type="GO" id="GO:0008360">
    <property type="term" value="P:regulation of cell shape"/>
    <property type="evidence" value="ECO:0007669"/>
    <property type="project" value="UniProtKB-KW"/>
</dbReference>
<dbReference type="FunFam" id="3.40.1190.10:FF:000001">
    <property type="entry name" value="UDP-N-acetylmuramate--L-alanine ligase"/>
    <property type="match status" value="1"/>
</dbReference>
<dbReference type="Gene3D" id="3.90.190.20">
    <property type="entry name" value="Mur ligase, C-terminal domain"/>
    <property type="match status" value="1"/>
</dbReference>
<dbReference type="Gene3D" id="3.40.1190.10">
    <property type="entry name" value="Mur-like, catalytic domain"/>
    <property type="match status" value="1"/>
</dbReference>
<dbReference type="Gene3D" id="3.40.50.720">
    <property type="entry name" value="NAD(P)-binding Rossmann-like Domain"/>
    <property type="match status" value="1"/>
</dbReference>
<dbReference type="HAMAP" id="MF_00046">
    <property type="entry name" value="MurC"/>
    <property type="match status" value="1"/>
</dbReference>
<dbReference type="InterPro" id="IPR036565">
    <property type="entry name" value="Mur-like_cat_sf"/>
</dbReference>
<dbReference type="InterPro" id="IPR004101">
    <property type="entry name" value="Mur_ligase_C"/>
</dbReference>
<dbReference type="InterPro" id="IPR036615">
    <property type="entry name" value="Mur_ligase_C_dom_sf"/>
</dbReference>
<dbReference type="InterPro" id="IPR013221">
    <property type="entry name" value="Mur_ligase_cen"/>
</dbReference>
<dbReference type="InterPro" id="IPR000713">
    <property type="entry name" value="Mur_ligase_N"/>
</dbReference>
<dbReference type="InterPro" id="IPR050061">
    <property type="entry name" value="MurCDEF_pg_biosynth"/>
</dbReference>
<dbReference type="InterPro" id="IPR005758">
    <property type="entry name" value="UDP-N-AcMur_Ala_ligase_MurC"/>
</dbReference>
<dbReference type="NCBIfam" id="TIGR01082">
    <property type="entry name" value="murC"/>
    <property type="match status" value="1"/>
</dbReference>
<dbReference type="PANTHER" id="PTHR43445:SF3">
    <property type="entry name" value="UDP-N-ACETYLMURAMATE--L-ALANINE LIGASE"/>
    <property type="match status" value="1"/>
</dbReference>
<dbReference type="PANTHER" id="PTHR43445">
    <property type="entry name" value="UDP-N-ACETYLMURAMATE--L-ALANINE LIGASE-RELATED"/>
    <property type="match status" value="1"/>
</dbReference>
<dbReference type="Pfam" id="PF01225">
    <property type="entry name" value="Mur_ligase"/>
    <property type="match status" value="1"/>
</dbReference>
<dbReference type="Pfam" id="PF02875">
    <property type="entry name" value="Mur_ligase_C"/>
    <property type="match status" value="1"/>
</dbReference>
<dbReference type="Pfam" id="PF08245">
    <property type="entry name" value="Mur_ligase_M"/>
    <property type="match status" value="1"/>
</dbReference>
<dbReference type="SUPFAM" id="SSF51984">
    <property type="entry name" value="MurCD N-terminal domain"/>
    <property type="match status" value="1"/>
</dbReference>
<dbReference type="SUPFAM" id="SSF53623">
    <property type="entry name" value="MurD-like peptide ligases, catalytic domain"/>
    <property type="match status" value="1"/>
</dbReference>
<dbReference type="SUPFAM" id="SSF53244">
    <property type="entry name" value="MurD-like peptide ligases, peptide-binding domain"/>
    <property type="match status" value="1"/>
</dbReference>
<gene>
    <name evidence="1" type="primary">murC</name>
    <name type="ordered locus">PP_1338</name>
</gene>
<protein>
    <recommendedName>
        <fullName evidence="1">UDP-N-acetylmuramate--L-alanine ligase</fullName>
        <ecNumber evidence="1">6.3.2.8</ecNumber>
    </recommendedName>
    <alternativeName>
        <fullName evidence="1">UDP-N-acetylmuramoyl-L-alanine synthetase</fullName>
    </alternativeName>
</protein>
<feature type="chain" id="PRO_0000182136" description="UDP-N-acetylmuramate--L-alanine ligase">
    <location>
        <begin position="1"/>
        <end position="482"/>
    </location>
</feature>
<feature type="binding site" evidence="1">
    <location>
        <begin position="123"/>
        <end position="129"/>
    </location>
    <ligand>
        <name>ATP</name>
        <dbReference type="ChEBI" id="CHEBI:30616"/>
    </ligand>
</feature>
<keyword id="KW-0067">ATP-binding</keyword>
<keyword id="KW-0131">Cell cycle</keyword>
<keyword id="KW-0132">Cell division</keyword>
<keyword id="KW-0133">Cell shape</keyword>
<keyword id="KW-0961">Cell wall biogenesis/degradation</keyword>
<keyword id="KW-0963">Cytoplasm</keyword>
<keyword id="KW-0436">Ligase</keyword>
<keyword id="KW-0547">Nucleotide-binding</keyword>
<keyword id="KW-0573">Peptidoglycan synthesis</keyword>
<keyword id="KW-1185">Reference proteome</keyword>
<organism>
    <name type="scientific">Pseudomonas putida (strain ATCC 47054 / DSM 6125 / CFBP 8728 / NCIMB 11950 / KT2440)</name>
    <dbReference type="NCBI Taxonomy" id="160488"/>
    <lineage>
        <taxon>Bacteria</taxon>
        <taxon>Pseudomonadati</taxon>
        <taxon>Pseudomonadota</taxon>
        <taxon>Gammaproteobacteria</taxon>
        <taxon>Pseudomonadales</taxon>
        <taxon>Pseudomonadaceae</taxon>
        <taxon>Pseudomonas</taxon>
    </lineage>
</organism>
<evidence type="ECO:0000255" key="1">
    <source>
        <dbReference type="HAMAP-Rule" id="MF_00046"/>
    </source>
</evidence>